<sequence>MDSDDNRTLSYEVVDHESDIGVIVYGKTYEELFSNAVYAMADLIVDVSRLKENRKMHEVITGKTPEDIMVNLLSRVLFYLDTYYILYYRITSKYSDGELDAYFYGSEIPEGIEYRNVIKAVTYSDLAVKPEEGYAKIIFDL</sequence>
<reference key="1">
    <citation type="journal article" date="2000" name="Nature">
        <title>The genome sequence of the thermoacidophilic scavenger Thermoplasma acidophilum.</title>
        <authorList>
            <person name="Ruepp A."/>
            <person name="Graml W."/>
            <person name="Santos-Martinez M.-L."/>
            <person name="Koretke K.K."/>
            <person name="Volker C."/>
            <person name="Mewes H.-W."/>
            <person name="Frishman D."/>
            <person name="Stocker S."/>
            <person name="Lupas A.N."/>
            <person name="Baumeister W."/>
        </authorList>
    </citation>
    <scope>NUCLEOTIDE SEQUENCE [LARGE SCALE GENOMIC DNA]</scope>
    <source>
        <strain>ATCC 25905 / DSM 1728 / JCM 9062 / NBRC 15155 / AMRC-C165</strain>
    </source>
</reference>
<feature type="chain" id="PRO_0000068855" description="Protein archease">
    <location>
        <begin position="1"/>
        <end position="141"/>
    </location>
</feature>
<feature type="binding site" evidence="1">
    <location>
        <position position="19"/>
    </location>
    <ligand>
        <name>Ca(2+)</name>
        <dbReference type="ChEBI" id="CHEBI:29108"/>
    </ligand>
</feature>
<feature type="binding site" evidence="1">
    <location>
        <position position="140"/>
    </location>
    <ligand>
        <name>Ca(2+)</name>
        <dbReference type="ChEBI" id="CHEBI:29108"/>
    </ligand>
</feature>
<proteinExistence type="inferred from homology"/>
<accession>Q9HKC1</accession>
<evidence type="ECO:0000250" key="1"/>
<evidence type="ECO:0000255" key="2">
    <source>
        <dbReference type="HAMAP-Rule" id="MF_01222"/>
    </source>
</evidence>
<gene>
    <name type="ordered locus">Ta0680</name>
</gene>
<dbReference type="EMBL" id="AL445065">
    <property type="protein sequence ID" value="CAC11818.1"/>
    <property type="molecule type" value="Genomic_DNA"/>
</dbReference>
<dbReference type="SMR" id="Q9HKC1"/>
<dbReference type="FunCoup" id="Q9HKC1">
    <property type="interactions" value="59"/>
</dbReference>
<dbReference type="STRING" id="273075.gene:9571900"/>
<dbReference type="PaxDb" id="273075-Ta0680"/>
<dbReference type="EnsemblBacteria" id="CAC11818">
    <property type="protein sequence ID" value="CAC11818"/>
    <property type="gene ID" value="CAC11818"/>
</dbReference>
<dbReference type="KEGG" id="tac:Ta0680"/>
<dbReference type="eggNOG" id="arCOG04055">
    <property type="taxonomic scope" value="Archaea"/>
</dbReference>
<dbReference type="HOGENOM" id="CLU_111362_3_0_2"/>
<dbReference type="InParanoid" id="Q9HKC1"/>
<dbReference type="OrthoDB" id="8831at2157"/>
<dbReference type="Proteomes" id="UP000001024">
    <property type="component" value="Chromosome"/>
</dbReference>
<dbReference type="GO" id="GO:0005509">
    <property type="term" value="F:calcium ion binding"/>
    <property type="evidence" value="ECO:0007669"/>
    <property type="project" value="UniProtKB-UniRule"/>
</dbReference>
<dbReference type="GO" id="GO:0006388">
    <property type="term" value="P:tRNA splicing, via endonucleolytic cleavage and ligation"/>
    <property type="evidence" value="ECO:0007669"/>
    <property type="project" value="UniProtKB-UniRule"/>
</dbReference>
<dbReference type="Gene3D" id="3.55.10.10">
    <property type="entry name" value="Archease domain"/>
    <property type="match status" value="1"/>
</dbReference>
<dbReference type="HAMAP" id="MF_01222">
    <property type="entry name" value="Archease_arch"/>
    <property type="match status" value="1"/>
</dbReference>
<dbReference type="InterPro" id="IPR002804">
    <property type="entry name" value="Archease"/>
</dbReference>
<dbReference type="InterPro" id="IPR022952">
    <property type="entry name" value="Archease_arc"/>
</dbReference>
<dbReference type="InterPro" id="IPR023572">
    <property type="entry name" value="Archease_dom"/>
</dbReference>
<dbReference type="InterPro" id="IPR036820">
    <property type="entry name" value="Archease_dom_sf"/>
</dbReference>
<dbReference type="NCBIfam" id="NF001617">
    <property type="entry name" value="PRK00407.1"/>
    <property type="match status" value="1"/>
</dbReference>
<dbReference type="PANTHER" id="PTHR12682">
    <property type="entry name" value="ARCHEASE"/>
    <property type="match status" value="1"/>
</dbReference>
<dbReference type="PANTHER" id="PTHR12682:SF11">
    <property type="entry name" value="PROTEIN ARCHEASE"/>
    <property type="match status" value="1"/>
</dbReference>
<dbReference type="Pfam" id="PF01951">
    <property type="entry name" value="Archease"/>
    <property type="match status" value="1"/>
</dbReference>
<dbReference type="SUPFAM" id="SSF69819">
    <property type="entry name" value="MTH1598-like"/>
    <property type="match status" value="1"/>
</dbReference>
<comment type="function">
    <text evidence="1">Activates the tRNA-splicing ligase complex by facilitating the enzymatic turnover of catalytic subunit RtcB. Acts by promoting the guanylylation of RtcB, a key intermediate step in tRNA ligation. Can also alter the NTP specificity of RtcB such that ATP, dGTP or ITP is used efficiently (By similarity).</text>
</comment>
<comment type="similarity">
    <text evidence="2">Belongs to the archease family.</text>
</comment>
<keyword id="KW-0106">Calcium</keyword>
<keyword id="KW-0479">Metal-binding</keyword>
<keyword id="KW-1185">Reference proteome</keyword>
<keyword id="KW-0819">tRNA processing</keyword>
<protein>
    <recommendedName>
        <fullName evidence="2">Protein archease</fullName>
    </recommendedName>
</protein>
<organism>
    <name type="scientific">Thermoplasma acidophilum (strain ATCC 25905 / DSM 1728 / JCM 9062 / NBRC 15155 / AMRC-C165)</name>
    <dbReference type="NCBI Taxonomy" id="273075"/>
    <lineage>
        <taxon>Archaea</taxon>
        <taxon>Methanobacteriati</taxon>
        <taxon>Thermoplasmatota</taxon>
        <taxon>Thermoplasmata</taxon>
        <taxon>Thermoplasmatales</taxon>
        <taxon>Thermoplasmataceae</taxon>
        <taxon>Thermoplasma</taxon>
    </lineage>
</organism>
<name>ARCH_THEAC</name>